<gene>
    <name evidence="1" type="primary">mraY</name>
    <name type="ordered locus">Maqu_2455</name>
</gene>
<protein>
    <recommendedName>
        <fullName evidence="1">Phospho-N-acetylmuramoyl-pentapeptide-transferase</fullName>
        <ecNumber evidence="1">2.7.8.13</ecNumber>
    </recommendedName>
    <alternativeName>
        <fullName evidence="1">UDP-MurNAc-pentapeptide phosphotransferase</fullName>
    </alternativeName>
</protein>
<dbReference type="EC" id="2.7.8.13" evidence="1"/>
<dbReference type="EMBL" id="CP000514">
    <property type="protein sequence ID" value="ABM19530.1"/>
    <property type="molecule type" value="Genomic_DNA"/>
</dbReference>
<dbReference type="RefSeq" id="WP_011785914.1">
    <property type="nucleotide sequence ID" value="NC_008740.1"/>
</dbReference>
<dbReference type="SMR" id="A1U3G1"/>
<dbReference type="STRING" id="351348.Maqu_2455"/>
<dbReference type="KEGG" id="maq:Maqu_2455"/>
<dbReference type="eggNOG" id="COG0472">
    <property type="taxonomic scope" value="Bacteria"/>
</dbReference>
<dbReference type="HOGENOM" id="CLU_023982_0_0_6"/>
<dbReference type="OrthoDB" id="9805475at2"/>
<dbReference type="UniPathway" id="UPA00219"/>
<dbReference type="Proteomes" id="UP000000998">
    <property type="component" value="Chromosome"/>
</dbReference>
<dbReference type="GO" id="GO:0005886">
    <property type="term" value="C:plasma membrane"/>
    <property type="evidence" value="ECO:0007669"/>
    <property type="project" value="UniProtKB-SubCell"/>
</dbReference>
<dbReference type="GO" id="GO:0046872">
    <property type="term" value="F:metal ion binding"/>
    <property type="evidence" value="ECO:0007669"/>
    <property type="project" value="UniProtKB-KW"/>
</dbReference>
<dbReference type="GO" id="GO:0008963">
    <property type="term" value="F:phospho-N-acetylmuramoyl-pentapeptide-transferase activity"/>
    <property type="evidence" value="ECO:0007669"/>
    <property type="project" value="UniProtKB-UniRule"/>
</dbReference>
<dbReference type="GO" id="GO:0051992">
    <property type="term" value="F:UDP-N-acetylmuramoyl-L-alanyl-D-glutamyl-meso-2,6-diaminopimelyl-D-alanyl-D-alanine:undecaprenyl-phosphate transferase activity"/>
    <property type="evidence" value="ECO:0007669"/>
    <property type="project" value="RHEA"/>
</dbReference>
<dbReference type="GO" id="GO:0051301">
    <property type="term" value="P:cell division"/>
    <property type="evidence" value="ECO:0007669"/>
    <property type="project" value="UniProtKB-KW"/>
</dbReference>
<dbReference type="GO" id="GO:0071555">
    <property type="term" value="P:cell wall organization"/>
    <property type="evidence" value="ECO:0007669"/>
    <property type="project" value="UniProtKB-KW"/>
</dbReference>
<dbReference type="GO" id="GO:0009252">
    <property type="term" value="P:peptidoglycan biosynthetic process"/>
    <property type="evidence" value="ECO:0007669"/>
    <property type="project" value="UniProtKB-UniRule"/>
</dbReference>
<dbReference type="GO" id="GO:0008360">
    <property type="term" value="P:regulation of cell shape"/>
    <property type="evidence" value="ECO:0007669"/>
    <property type="project" value="UniProtKB-KW"/>
</dbReference>
<dbReference type="CDD" id="cd06852">
    <property type="entry name" value="GT_MraY"/>
    <property type="match status" value="1"/>
</dbReference>
<dbReference type="HAMAP" id="MF_00038">
    <property type="entry name" value="MraY"/>
    <property type="match status" value="1"/>
</dbReference>
<dbReference type="InterPro" id="IPR000715">
    <property type="entry name" value="Glycosyl_transferase_4"/>
</dbReference>
<dbReference type="InterPro" id="IPR003524">
    <property type="entry name" value="PNAcMuramoyl-5peptid_Trfase"/>
</dbReference>
<dbReference type="InterPro" id="IPR018480">
    <property type="entry name" value="PNAcMuramoyl-5peptid_Trfase_CS"/>
</dbReference>
<dbReference type="NCBIfam" id="TIGR00445">
    <property type="entry name" value="mraY"/>
    <property type="match status" value="1"/>
</dbReference>
<dbReference type="PANTHER" id="PTHR22926">
    <property type="entry name" value="PHOSPHO-N-ACETYLMURAMOYL-PENTAPEPTIDE-TRANSFERASE"/>
    <property type="match status" value="1"/>
</dbReference>
<dbReference type="PANTHER" id="PTHR22926:SF5">
    <property type="entry name" value="PHOSPHO-N-ACETYLMURAMOYL-PENTAPEPTIDE-TRANSFERASE HOMOLOG"/>
    <property type="match status" value="1"/>
</dbReference>
<dbReference type="Pfam" id="PF00953">
    <property type="entry name" value="Glycos_transf_4"/>
    <property type="match status" value="1"/>
</dbReference>
<dbReference type="Pfam" id="PF10555">
    <property type="entry name" value="MraY_sig1"/>
    <property type="match status" value="1"/>
</dbReference>
<dbReference type="PROSITE" id="PS01347">
    <property type="entry name" value="MRAY_1"/>
    <property type="match status" value="1"/>
</dbReference>
<dbReference type="PROSITE" id="PS01348">
    <property type="entry name" value="MRAY_2"/>
    <property type="match status" value="1"/>
</dbReference>
<sequence>MLLWLTEILSQYFSSLTVFQYLTLRAILGILTALLISLVIGPVMIRKLSQYQIGQAVRDDGPQTHLSKAGTPTMGGALILVAIAISTLLWADLTNRYVWVVLLVTLLFGAIGWVDDYRKVVERNPRGLPARWKYFWQSVIGATAAIVLYVTASMPQETSLYLPFLKNVSLTLGPVLFILLTYFVIVGSSNAVNLTDGLDGLAIMPTVMVAGALAIFAYLSGHAQFANYLLIPHLPGTGELIIFCGALVGAGLGFLWFNTYPAQVFMGDVGALALGAALGTVAVIVRQEIVLFIMGGVFVMETISVILQVASFRLTGRRIFRMAPLHHHFELKGWPEPRVIVRFWVVTVVLVLIGLASLKIR</sequence>
<organism>
    <name type="scientific">Marinobacter nauticus (strain ATCC 700491 / DSM 11845 / VT8)</name>
    <name type="common">Marinobacter aquaeolei</name>
    <dbReference type="NCBI Taxonomy" id="351348"/>
    <lineage>
        <taxon>Bacteria</taxon>
        <taxon>Pseudomonadati</taxon>
        <taxon>Pseudomonadota</taxon>
        <taxon>Gammaproteobacteria</taxon>
        <taxon>Pseudomonadales</taxon>
        <taxon>Marinobacteraceae</taxon>
        <taxon>Marinobacter</taxon>
    </lineage>
</organism>
<name>MRAY_MARN8</name>
<proteinExistence type="inferred from homology"/>
<keyword id="KW-0131">Cell cycle</keyword>
<keyword id="KW-0132">Cell division</keyword>
<keyword id="KW-0997">Cell inner membrane</keyword>
<keyword id="KW-1003">Cell membrane</keyword>
<keyword id="KW-0133">Cell shape</keyword>
<keyword id="KW-0961">Cell wall biogenesis/degradation</keyword>
<keyword id="KW-0460">Magnesium</keyword>
<keyword id="KW-0472">Membrane</keyword>
<keyword id="KW-0479">Metal-binding</keyword>
<keyword id="KW-0573">Peptidoglycan synthesis</keyword>
<keyword id="KW-0808">Transferase</keyword>
<keyword id="KW-0812">Transmembrane</keyword>
<keyword id="KW-1133">Transmembrane helix</keyword>
<accession>A1U3G1</accession>
<evidence type="ECO:0000255" key="1">
    <source>
        <dbReference type="HAMAP-Rule" id="MF_00038"/>
    </source>
</evidence>
<reference key="1">
    <citation type="journal article" date="2011" name="Appl. Environ. Microbiol.">
        <title>Genomic potential of Marinobacter aquaeolei, a biogeochemical 'opportunitroph'.</title>
        <authorList>
            <person name="Singer E."/>
            <person name="Webb E.A."/>
            <person name="Nelson W.C."/>
            <person name="Heidelberg J.F."/>
            <person name="Ivanova N."/>
            <person name="Pati A."/>
            <person name="Edwards K.J."/>
        </authorList>
    </citation>
    <scope>NUCLEOTIDE SEQUENCE [LARGE SCALE GENOMIC DNA]</scope>
    <source>
        <strain>ATCC 700491 / DSM 11845 / VT8</strain>
    </source>
</reference>
<feature type="chain" id="PRO_1000003006" description="Phospho-N-acetylmuramoyl-pentapeptide-transferase">
    <location>
        <begin position="1"/>
        <end position="361"/>
    </location>
</feature>
<feature type="transmembrane region" description="Helical" evidence="1">
    <location>
        <begin position="26"/>
        <end position="46"/>
    </location>
</feature>
<feature type="transmembrane region" description="Helical" evidence="1">
    <location>
        <begin position="73"/>
        <end position="93"/>
    </location>
</feature>
<feature type="transmembrane region" description="Helical" evidence="1">
    <location>
        <begin position="97"/>
        <end position="117"/>
    </location>
</feature>
<feature type="transmembrane region" description="Helical" evidence="1">
    <location>
        <begin position="134"/>
        <end position="154"/>
    </location>
</feature>
<feature type="transmembrane region" description="Helical" evidence="1">
    <location>
        <begin position="168"/>
        <end position="188"/>
    </location>
</feature>
<feature type="transmembrane region" description="Helical" evidence="1">
    <location>
        <begin position="200"/>
        <end position="220"/>
    </location>
</feature>
<feature type="transmembrane region" description="Helical" evidence="1">
    <location>
        <begin position="237"/>
        <end position="257"/>
    </location>
</feature>
<feature type="transmembrane region" description="Helical" evidence="1">
    <location>
        <begin position="264"/>
        <end position="284"/>
    </location>
</feature>
<feature type="transmembrane region" description="Helical" evidence="1">
    <location>
        <begin position="289"/>
        <end position="309"/>
    </location>
</feature>
<feature type="transmembrane region" description="Helical" evidence="1">
    <location>
        <begin position="340"/>
        <end position="360"/>
    </location>
</feature>
<comment type="function">
    <text evidence="1">Catalyzes the initial step of the lipid cycle reactions in the biosynthesis of the cell wall peptidoglycan: transfers peptidoglycan precursor phospho-MurNAc-pentapeptide from UDP-MurNAc-pentapeptide onto the lipid carrier undecaprenyl phosphate, yielding undecaprenyl-pyrophosphoryl-MurNAc-pentapeptide, known as lipid I.</text>
</comment>
<comment type="catalytic activity">
    <reaction evidence="1">
        <text>UDP-N-acetyl-alpha-D-muramoyl-L-alanyl-gamma-D-glutamyl-meso-2,6-diaminopimeloyl-D-alanyl-D-alanine + di-trans,octa-cis-undecaprenyl phosphate = di-trans,octa-cis-undecaprenyl diphospho-N-acetyl-alpha-D-muramoyl-L-alanyl-D-glutamyl-meso-2,6-diaminopimeloyl-D-alanyl-D-alanine + UMP</text>
        <dbReference type="Rhea" id="RHEA:28386"/>
        <dbReference type="ChEBI" id="CHEBI:57865"/>
        <dbReference type="ChEBI" id="CHEBI:60392"/>
        <dbReference type="ChEBI" id="CHEBI:61386"/>
        <dbReference type="ChEBI" id="CHEBI:61387"/>
        <dbReference type="EC" id="2.7.8.13"/>
    </reaction>
</comment>
<comment type="cofactor">
    <cofactor evidence="1">
        <name>Mg(2+)</name>
        <dbReference type="ChEBI" id="CHEBI:18420"/>
    </cofactor>
</comment>
<comment type="pathway">
    <text evidence="1">Cell wall biogenesis; peptidoglycan biosynthesis.</text>
</comment>
<comment type="subcellular location">
    <subcellularLocation>
        <location evidence="1">Cell inner membrane</location>
        <topology evidence="1">Multi-pass membrane protein</topology>
    </subcellularLocation>
</comment>
<comment type="similarity">
    <text evidence="1">Belongs to the glycosyltransferase 4 family. MraY subfamily.</text>
</comment>